<proteinExistence type="inferred from homology"/>
<dbReference type="EMBL" id="AY596295">
    <property type="protein sequence ID" value="AAV44710.1"/>
    <property type="molecule type" value="Genomic_DNA"/>
</dbReference>
<dbReference type="RefSeq" id="WP_011222485.1">
    <property type="nucleotide sequence ID" value="NC_006394.1"/>
</dbReference>
<dbReference type="SMR" id="Q5V7B0"/>
<dbReference type="EnsemblBacteria" id="AAV44710">
    <property type="protein sequence ID" value="AAV44710"/>
    <property type="gene ID" value="pNG6174"/>
</dbReference>
<dbReference type="GeneID" id="40150729"/>
<dbReference type="KEGG" id="hma:pNG6174"/>
<dbReference type="PATRIC" id="fig|272569.17.peg.447"/>
<dbReference type="HOGENOM" id="CLU_025112_2_1_2"/>
<dbReference type="Proteomes" id="UP000001169">
    <property type="component" value="Plasmid pNG600"/>
</dbReference>
<dbReference type="GO" id="GO:0005524">
    <property type="term" value="F:ATP binding"/>
    <property type="evidence" value="ECO:0007669"/>
    <property type="project" value="UniProtKB-UniRule"/>
</dbReference>
<dbReference type="GO" id="GO:0016887">
    <property type="term" value="F:ATP hydrolysis activity"/>
    <property type="evidence" value="ECO:0007669"/>
    <property type="project" value="InterPro"/>
</dbReference>
<dbReference type="GO" id="GO:0006260">
    <property type="term" value="P:DNA replication"/>
    <property type="evidence" value="ECO:0007669"/>
    <property type="project" value="UniProtKB-UniRule"/>
</dbReference>
<dbReference type="CDD" id="cd08768">
    <property type="entry name" value="Cdc6_C"/>
    <property type="match status" value="1"/>
</dbReference>
<dbReference type="FunFam" id="1.10.8.60:FF:000073">
    <property type="entry name" value="ORC1-type DNA replication protein"/>
    <property type="match status" value="1"/>
</dbReference>
<dbReference type="Gene3D" id="1.10.8.60">
    <property type="match status" value="1"/>
</dbReference>
<dbReference type="Gene3D" id="3.40.50.300">
    <property type="entry name" value="P-loop containing nucleotide triphosphate hydrolases"/>
    <property type="match status" value="1"/>
</dbReference>
<dbReference type="Gene3D" id="1.10.10.10">
    <property type="entry name" value="Winged helix-like DNA-binding domain superfamily/Winged helix DNA-binding domain"/>
    <property type="match status" value="1"/>
</dbReference>
<dbReference type="HAMAP" id="MF_01407">
    <property type="entry name" value="ORC1_type_DNA_replic_protein"/>
    <property type="match status" value="1"/>
</dbReference>
<dbReference type="InterPro" id="IPR003593">
    <property type="entry name" value="AAA+_ATPase"/>
</dbReference>
<dbReference type="InterPro" id="IPR049945">
    <property type="entry name" value="AAA_22"/>
</dbReference>
<dbReference type="InterPro" id="IPR015163">
    <property type="entry name" value="Cdc6_C"/>
</dbReference>
<dbReference type="InterPro" id="IPR055237">
    <property type="entry name" value="Cdc6_lid"/>
</dbReference>
<dbReference type="InterPro" id="IPR050311">
    <property type="entry name" value="ORC1/CDC6"/>
</dbReference>
<dbReference type="InterPro" id="IPR014277">
    <property type="entry name" value="Orc1/Cdc6_arc"/>
</dbReference>
<dbReference type="InterPro" id="IPR027417">
    <property type="entry name" value="P-loop_NTPase"/>
</dbReference>
<dbReference type="InterPro" id="IPR036388">
    <property type="entry name" value="WH-like_DNA-bd_sf"/>
</dbReference>
<dbReference type="InterPro" id="IPR036390">
    <property type="entry name" value="WH_DNA-bd_sf"/>
</dbReference>
<dbReference type="NCBIfam" id="TIGR02928">
    <property type="entry name" value="orc1/cdc6 family replication initiation protein"/>
    <property type="match status" value="1"/>
</dbReference>
<dbReference type="PANTHER" id="PTHR10763">
    <property type="entry name" value="CELL DIVISION CONTROL PROTEIN 6-RELATED"/>
    <property type="match status" value="1"/>
</dbReference>
<dbReference type="PANTHER" id="PTHR10763:SF22">
    <property type="entry name" value="ORC1-TYPE DNA REPLICATION PROTEIN"/>
    <property type="match status" value="1"/>
</dbReference>
<dbReference type="Pfam" id="PF13401">
    <property type="entry name" value="AAA_22"/>
    <property type="match status" value="1"/>
</dbReference>
<dbReference type="Pfam" id="PF09079">
    <property type="entry name" value="Cdc6_C"/>
    <property type="match status" value="1"/>
</dbReference>
<dbReference type="Pfam" id="PF22703">
    <property type="entry name" value="Cdc6_lid"/>
    <property type="match status" value="1"/>
</dbReference>
<dbReference type="SMART" id="SM00382">
    <property type="entry name" value="AAA"/>
    <property type="match status" value="1"/>
</dbReference>
<dbReference type="SMART" id="SM01074">
    <property type="entry name" value="Cdc6_C"/>
    <property type="match status" value="1"/>
</dbReference>
<dbReference type="SUPFAM" id="SSF52540">
    <property type="entry name" value="P-loop containing nucleoside triphosphate hydrolases"/>
    <property type="match status" value="1"/>
</dbReference>
<dbReference type="SUPFAM" id="SSF46785">
    <property type="entry name" value="Winged helix' DNA-binding domain"/>
    <property type="match status" value="1"/>
</dbReference>
<evidence type="ECO:0000255" key="1">
    <source>
        <dbReference type="HAMAP-Rule" id="MF_01407"/>
    </source>
</evidence>
<accession>Q5V7B0</accession>
<geneLocation type="plasmid">
    <name>pNG600</name>
</geneLocation>
<sequence length="422" mass="47740">MPNNESTQTTVDEILNVDEDNDEDESNIFEKPWLLEIDNVPDANRIVGRDDHITFLAKNLRKMRTNSVPDNVLEWGETGTGKTLVARHVCERLEAATEGTDSPIVTAYINPDPISTYTSTFRKIAEQVNAKAENPLEVPYQGLSAEHYRDQKLWPVVQREFSGGLVVIIDEIDKHGEVNEVLYTLSRTQSKDDVDFPVITIGISNDIEFKGEIESRVQSTLQPEHRTFTPYEEDQLIAILENRRDAFYDGVLDDEVIPTTAELAAEEHGDARRAVRLFRNAGEIADEEGDDIVTAEHVHEADELVEVELFMEMVKGTPLSGKLLLFALTRLDRNNPEKEWFRTSEIHEVYQTVARDVKVEPKGYNRALELLNKHVTTGVLESKKKEGGDQGKFRSYSLQGDVESTRTGLINSTPELQTLMGW</sequence>
<keyword id="KW-0067">ATP-binding</keyword>
<keyword id="KW-0235">DNA replication</keyword>
<keyword id="KW-0547">Nucleotide-binding</keyword>
<keyword id="KW-0614">Plasmid</keyword>
<keyword id="KW-1185">Reference proteome</keyword>
<name>CDC6M_HALMA</name>
<reference key="1">
    <citation type="journal article" date="2004" name="Genome Res.">
        <title>Genome sequence of Haloarcula marismortui: a halophilic archaeon from the Dead Sea.</title>
        <authorList>
            <person name="Baliga N.S."/>
            <person name="Bonneau R."/>
            <person name="Facciotti M.T."/>
            <person name="Pan M."/>
            <person name="Glusman G."/>
            <person name="Deutsch E.W."/>
            <person name="Shannon P."/>
            <person name="Chiu Y."/>
            <person name="Weng R.S."/>
            <person name="Gan R.R."/>
            <person name="Hung P."/>
            <person name="Date S.V."/>
            <person name="Marcotte E."/>
            <person name="Hood L."/>
            <person name="Ng W.V."/>
        </authorList>
    </citation>
    <scope>NUCLEOTIDE SEQUENCE [LARGE SCALE GENOMIC DNA]</scope>
    <source>
        <strain>ATCC 43049 / DSM 3752 / JCM 8966 / VKM B-1809</strain>
    </source>
</reference>
<gene>
    <name type="primary">cdc6m</name>
    <name type="ordered locus">pNG6174</name>
</gene>
<comment type="function">
    <text evidence="1">Involved in regulation of DNA replication.</text>
</comment>
<comment type="similarity">
    <text evidence="1">Belongs to the CDC6/cdc18 family.</text>
</comment>
<protein>
    <recommendedName>
        <fullName evidence="1">ORC1-type DNA replication protein 13</fullName>
    </recommendedName>
</protein>
<feature type="chain" id="PRO_0000150994" description="ORC1-type DNA replication protein 13">
    <location>
        <begin position="1"/>
        <end position="422"/>
    </location>
</feature>
<feature type="binding site" evidence="1">
    <location>
        <begin position="80"/>
        <end position="84"/>
    </location>
    <ligand>
        <name>ATP</name>
        <dbReference type="ChEBI" id="CHEBI:30616"/>
    </ligand>
</feature>
<feature type="binding site" evidence="1">
    <location>
        <position position="231"/>
    </location>
    <ligand>
        <name>ATP</name>
        <dbReference type="ChEBI" id="CHEBI:30616"/>
    </ligand>
</feature>
<feature type="binding site" evidence="1">
    <location>
        <position position="243"/>
    </location>
    <ligand>
        <name>ATP</name>
        <dbReference type="ChEBI" id="CHEBI:30616"/>
    </ligand>
</feature>
<organism>
    <name type="scientific">Haloarcula marismortui (strain ATCC 43049 / DSM 3752 / JCM 8966 / VKM B-1809)</name>
    <name type="common">Halobacterium marismortui</name>
    <dbReference type="NCBI Taxonomy" id="272569"/>
    <lineage>
        <taxon>Archaea</taxon>
        <taxon>Methanobacteriati</taxon>
        <taxon>Methanobacteriota</taxon>
        <taxon>Stenosarchaea group</taxon>
        <taxon>Halobacteria</taxon>
        <taxon>Halobacteriales</taxon>
        <taxon>Haloarculaceae</taxon>
        <taxon>Haloarcula</taxon>
    </lineage>
</organism>